<evidence type="ECO:0000256" key="1">
    <source>
        <dbReference type="SAM" id="MobiDB-lite"/>
    </source>
</evidence>
<evidence type="ECO:0000305" key="2"/>
<gene>
    <name type="primary">HSP70</name>
</gene>
<organism>
    <name type="scientific">Blastocladiella emersonii</name>
    <name type="common">Aquatic fungus</name>
    <dbReference type="NCBI Taxonomy" id="4808"/>
    <lineage>
        <taxon>Eukaryota</taxon>
        <taxon>Fungi</taxon>
        <taxon>Fungi incertae sedis</taxon>
        <taxon>Blastocladiomycota</taxon>
        <taxon>Blastocladiomycetes</taxon>
        <taxon>Blastocladiales</taxon>
        <taxon>Blastocladiaceae</taxon>
        <taxon>Blastocladiella</taxon>
    </lineage>
</organism>
<accession>P48720</accession>
<reference key="1">
    <citation type="journal article" date="1995" name="Gene">
        <title>A unique intron-containing hsp70 gene induced by heat shock and during sporulation in the aquatic fungus Blastocladiella emersonii.</title>
        <authorList>
            <person name="Stefani R.M."/>
            <person name="Gomes S.L."/>
        </authorList>
    </citation>
    <scope>NUCLEOTIDE SEQUENCE [GENOMIC DNA]</scope>
</reference>
<dbReference type="EMBL" id="L22497">
    <property type="protein sequence ID" value="AAA65099.1"/>
    <property type="molecule type" value="Genomic_DNA"/>
</dbReference>
<dbReference type="SMR" id="P48720"/>
<dbReference type="GO" id="GO:0005524">
    <property type="term" value="F:ATP binding"/>
    <property type="evidence" value="ECO:0007669"/>
    <property type="project" value="UniProtKB-KW"/>
</dbReference>
<dbReference type="GO" id="GO:0140662">
    <property type="term" value="F:ATP-dependent protein folding chaperone"/>
    <property type="evidence" value="ECO:0007669"/>
    <property type="project" value="InterPro"/>
</dbReference>
<dbReference type="CDD" id="cd10233">
    <property type="entry name" value="ASKHA_NBD_HSP70_HSPA1"/>
    <property type="match status" value="1"/>
</dbReference>
<dbReference type="FunFam" id="2.60.34.10:FF:000002">
    <property type="entry name" value="Heat shock 70 kDa"/>
    <property type="match status" value="1"/>
</dbReference>
<dbReference type="FunFam" id="3.30.420.40:FF:000172">
    <property type="entry name" value="Heat shock 70 kDa protein"/>
    <property type="match status" value="2"/>
</dbReference>
<dbReference type="FunFam" id="3.30.30.30:FF:000001">
    <property type="entry name" value="heat shock 70 kDa protein-like"/>
    <property type="match status" value="1"/>
</dbReference>
<dbReference type="FunFam" id="3.90.640.10:FF:000134">
    <property type="entry name" value="Heat shock cognate 71 kDa protein"/>
    <property type="match status" value="1"/>
</dbReference>
<dbReference type="FunFam" id="1.20.1270.10:FF:000021">
    <property type="entry name" value="Heat shock protein 70"/>
    <property type="match status" value="1"/>
</dbReference>
<dbReference type="FunFam" id="3.30.420.40:FF:000026">
    <property type="entry name" value="Heat shock protein 70"/>
    <property type="match status" value="1"/>
</dbReference>
<dbReference type="Gene3D" id="1.20.1270.10">
    <property type="match status" value="1"/>
</dbReference>
<dbReference type="Gene3D" id="3.30.30.30">
    <property type="match status" value="1"/>
</dbReference>
<dbReference type="Gene3D" id="3.30.420.40">
    <property type="match status" value="2"/>
</dbReference>
<dbReference type="Gene3D" id="3.90.640.10">
    <property type="entry name" value="Actin, Chain A, domain 4"/>
    <property type="match status" value="1"/>
</dbReference>
<dbReference type="Gene3D" id="2.60.34.10">
    <property type="entry name" value="Substrate Binding Domain Of DNAk, Chain A, domain 1"/>
    <property type="match status" value="1"/>
</dbReference>
<dbReference type="InterPro" id="IPR043129">
    <property type="entry name" value="ATPase_NBD"/>
</dbReference>
<dbReference type="InterPro" id="IPR018181">
    <property type="entry name" value="Heat_shock_70_CS"/>
</dbReference>
<dbReference type="InterPro" id="IPR029048">
    <property type="entry name" value="HSP70_C_sf"/>
</dbReference>
<dbReference type="InterPro" id="IPR029047">
    <property type="entry name" value="HSP70_peptide-bd_sf"/>
</dbReference>
<dbReference type="InterPro" id="IPR013126">
    <property type="entry name" value="Hsp_70_fam"/>
</dbReference>
<dbReference type="NCBIfam" id="NF001413">
    <property type="entry name" value="PRK00290.1"/>
    <property type="match status" value="1"/>
</dbReference>
<dbReference type="PANTHER" id="PTHR19375">
    <property type="entry name" value="HEAT SHOCK PROTEIN 70KDA"/>
    <property type="match status" value="1"/>
</dbReference>
<dbReference type="Pfam" id="PF00012">
    <property type="entry name" value="HSP70"/>
    <property type="match status" value="1"/>
</dbReference>
<dbReference type="PRINTS" id="PR00301">
    <property type="entry name" value="HEATSHOCK70"/>
</dbReference>
<dbReference type="SUPFAM" id="SSF53067">
    <property type="entry name" value="Actin-like ATPase domain"/>
    <property type="match status" value="2"/>
</dbReference>
<dbReference type="SUPFAM" id="SSF100934">
    <property type="entry name" value="Heat shock protein 70kD (HSP70), C-terminal subdomain"/>
    <property type="match status" value="1"/>
</dbReference>
<dbReference type="SUPFAM" id="SSF100920">
    <property type="entry name" value="Heat shock protein 70kD (HSP70), peptide-binding domain"/>
    <property type="match status" value="1"/>
</dbReference>
<dbReference type="PROSITE" id="PS00297">
    <property type="entry name" value="HSP70_1"/>
    <property type="match status" value="1"/>
</dbReference>
<dbReference type="PROSITE" id="PS00329">
    <property type="entry name" value="HSP70_2"/>
    <property type="match status" value="1"/>
</dbReference>
<dbReference type="PROSITE" id="PS01036">
    <property type="entry name" value="HSP70_3"/>
    <property type="match status" value="1"/>
</dbReference>
<feature type="chain" id="PRO_0000078362" description="Heat shock 70 kDa protein">
    <location>
        <begin position="1"/>
        <end position="649"/>
    </location>
</feature>
<feature type="region of interest" description="Disordered" evidence="1">
    <location>
        <begin position="617"/>
        <end position="649"/>
    </location>
</feature>
<feature type="compositionally biased region" description="Low complexity" evidence="1">
    <location>
        <begin position="638"/>
        <end position="649"/>
    </location>
</feature>
<protein>
    <recommendedName>
        <fullName>Heat shock 70 kDa protein</fullName>
    </recommendedName>
</protein>
<comment type="similarity">
    <text evidence="2">Belongs to the heat shock protein 70 family.</text>
</comment>
<keyword id="KW-0067">ATP-binding</keyword>
<keyword id="KW-0143">Chaperone</keyword>
<keyword id="KW-0547">Nucleotide-binding</keyword>
<name>HSP70_BLAEM</name>
<sequence length="649" mass="70834">MTTKLDSPAVGIDLGTTYSCVGVWQNDRVEIIANDQGNRTTPSYVGFTDSERLIGDAAKNQVAMNPHNTVFDAKRLIGRRFDDDVVQADMKHWSFTVVNKNSKPLFQVEFKGETKTFTPEEFSSMILTKMKETAEAYLGTKVNHAVVTVPAYFNDSQRQATKDAGAIAGLNVLRIINEPTAAAIAYGLDKKAEAGEKNVLIFDLGGGTFDVSLLTIEDGIFEVKATAGDTHLGAEDFDNRLVNHFVQEFKRKHKKDLSGKARPRRLRTACERAKRTLSSSAQTSIEIDSLFEGIDFYTSITRARFEELCADLFRSTLDPVEKVLRDAKMAKNEVHEIVLVGGSTRIPRIQKLVSDFFNGKEPNKSINPDEAVAYGAAVQAAILAGDQSEKVQDLLLLDVAPLSLGIETAGGVMTPLIKRNTTIPAKKSETFSTYADNQPGVLIQVYEGERARTKDNNLLGKFELTGIPPAPPRVPQIEVSFDVGADGILNVSAVDKSTNRSNKITITNDKGRLSKEEIERMVAEAEKYKKEDEEAASRIQAKNGLESYAYNLRNTLNDDKVAGKMDAADKETLNKAIDETISWLDGNQEGAKDEYEHKQKELEGVANPIMTKLYSAAGGAPGGMPGGFDPSGAPPPAADTTGPTIEEVD</sequence>
<proteinExistence type="inferred from homology"/>